<proteinExistence type="evidence at protein level"/>
<name>FBX50_MOUSE</name>
<dbReference type="EMBL" id="AC136456">
    <property type="status" value="NOT_ANNOTATED_CDS"/>
    <property type="molecule type" value="Genomic_DNA"/>
</dbReference>
<dbReference type="EMBL" id="CH466593">
    <property type="protein sequence ID" value="EDL24129.1"/>
    <property type="status" value="ALT_INIT"/>
    <property type="molecule type" value="Genomic_DNA"/>
</dbReference>
<dbReference type="EMBL" id="AK028022">
    <property type="protein sequence ID" value="BAC25704.1"/>
    <property type="molecule type" value="mRNA"/>
</dbReference>
<dbReference type="CCDS" id="CCDS39862.2"/>
<dbReference type="RefSeq" id="NP_001074584.2">
    <property type="nucleotide sequence ID" value="NM_001081115.2"/>
</dbReference>
<dbReference type="RefSeq" id="XP_030098311.1">
    <property type="nucleotide sequence ID" value="XM_030242451.2"/>
</dbReference>
<dbReference type="SMR" id="G3X9C2"/>
<dbReference type="BioGRID" id="231354">
    <property type="interactions" value="4"/>
</dbReference>
<dbReference type="FunCoup" id="G3X9C2">
    <property type="interactions" value="127"/>
</dbReference>
<dbReference type="IntAct" id="G3X9C2">
    <property type="interactions" value="1"/>
</dbReference>
<dbReference type="MINT" id="G3X9C2"/>
<dbReference type="STRING" id="10090.ENSMUSP00000055562"/>
<dbReference type="GlyGen" id="G3X9C2">
    <property type="glycosylation" value="1 site"/>
</dbReference>
<dbReference type="iPTMnet" id="G3X9C2"/>
<dbReference type="PhosphoSitePlus" id="G3X9C2"/>
<dbReference type="jPOST" id="G3X9C2"/>
<dbReference type="PaxDb" id="10090-ENSMUSP00000055562"/>
<dbReference type="PeptideAtlas" id="G3X9C2"/>
<dbReference type="ProteomicsDB" id="271886"/>
<dbReference type="Pumba" id="G3X9C2"/>
<dbReference type="Antibodypedia" id="45009">
    <property type="antibodies" value="69 antibodies from 16 providers"/>
</dbReference>
<dbReference type="Ensembl" id="ENSMUST00000239002.2">
    <property type="protein sequence ID" value="ENSMUSP00000159104.2"/>
    <property type="gene ID" value="ENSMUSG00000047586.5"/>
</dbReference>
<dbReference type="GeneID" id="233038"/>
<dbReference type="KEGG" id="mmu:233038"/>
<dbReference type="AGR" id="MGI:2685009"/>
<dbReference type="CTD" id="342897"/>
<dbReference type="MGI" id="MGI:2685009">
    <property type="gene designation" value="Nccrp1"/>
</dbReference>
<dbReference type="VEuPathDB" id="HostDB:ENSMUSG00000047586"/>
<dbReference type="eggNOG" id="KOG3248">
    <property type="taxonomic scope" value="Eukaryota"/>
</dbReference>
<dbReference type="GeneTree" id="ENSGT00940000161313"/>
<dbReference type="InParanoid" id="G3X9C2"/>
<dbReference type="OrthoDB" id="1107553at2759"/>
<dbReference type="TreeFam" id="TF320527"/>
<dbReference type="BioGRID-ORCS" id="233038">
    <property type="hits" value="4 hits in 77 CRISPR screens"/>
</dbReference>
<dbReference type="ChiTaRS" id="Nccrp1">
    <property type="organism name" value="mouse"/>
</dbReference>
<dbReference type="PRO" id="PR:G3X9C2"/>
<dbReference type="Proteomes" id="UP000000589">
    <property type="component" value="Chromosome 7"/>
</dbReference>
<dbReference type="RNAct" id="G3X9C2">
    <property type="molecule type" value="protein"/>
</dbReference>
<dbReference type="Bgee" id="ENSMUSG00000047586">
    <property type="expression patterns" value="Expressed in esophagus and 25 other cell types or tissues"/>
</dbReference>
<dbReference type="ExpressionAtlas" id="G3X9C2">
    <property type="expression patterns" value="baseline and differential"/>
</dbReference>
<dbReference type="GO" id="GO:0005737">
    <property type="term" value="C:cytoplasm"/>
    <property type="evidence" value="ECO:0007669"/>
    <property type="project" value="UniProtKB-SubCell"/>
</dbReference>
<dbReference type="FunFam" id="2.60.120.260:FF:000086">
    <property type="entry name" value="Non-specific cytotoxic cell receptor protein 1"/>
    <property type="match status" value="1"/>
</dbReference>
<dbReference type="Gene3D" id="2.60.120.260">
    <property type="entry name" value="Galactose-binding domain-like"/>
    <property type="match status" value="1"/>
</dbReference>
<dbReference type="InterPro" id="IPR007397">
    <property type="entry name" value="F-box-assoc_dom"/>
</dbReference>
<dbReference type="InterPro" id="IPR039752">
    <property type="entry name" value="F-box_only"/>
</dbReference>
<dbReference type="InterPro" id="IPR008979">
    <property type="entry name" value="Galactose-bd-like_sf"/>
</dbReference>
<dbReference type="PANTHER" id="PTHR12125:SF1">
    <property type="entry name" value="F-BOX ONLY PROTEIN 50"/>
    <property type="match status" value="1"/>
</dbReference>
<dbReference type="PANTHER" id="PTHR12125">
    <property type="entry name" value="F-BOX ONLY PROTEIN 6-LIKE PROTEIN"/>
    <property type="match status" value="1"/>
</dbReference>
<dbReference type="Pfam" id="PF04300">
    <property type="entry name" value="FBA"/>
    <property type="match status" value="1"/>
</dbReference>
<dbReference type="SMART" id="SM01198">
    <property type="entry name" value="FBA"/>
    <property type="match status" value="1"/>
</dbReference>
<dbReference type="SUPFAM" id="SSF49785">
    <property type="entry name" value="Galactose-binding domain-like"/>
    <property type="match status" value="1"/>
</dbReference>
<dbReference type="PROSITE" id="PS51114">
    <property type="entry name" value="FBA"/>
    <property type="match status" value="1"/>
</dbReference>
<comment type="function">
    <text evidence="1">Promotes cell proliferation.</text>
</comment>
<comment type="subcellular location">
    <subcellularLocation>
        <location evidence="1">Cytoplasm</location>
    </subcellularLocation>
</comment>
<comment type="tissue specificity">
    <text evidence="4">Strongly expressed in kidney. Weakly expressed in stomach, colon, duodenum and prostate.</text>
</comment>
<comment type="sequence caution" evidence="5">
    <conflict type="erroneous initiation">
        <sequence resource="EMBL-CDS" id="EDL24129"/>
    </conflict>
    <text>Extended N-terminus.</text>
</comment>
<accession>G3X9C2</accession>
<accession>Q8BT24</accession>
<sequence>MEKTQDRDTLSGRMEAEGSLNSEELPPHPQSPPPPPSPRSPTSPVTPELPQPNAPTEVEARQLLVEEWGPLSGKLELPPRISWQLLFLERPLYRNLLSSPNPEGINIYQPAPPTGPTRKPLKELGNFRGWYITTQNLQGPLSWTVKEQCVNLLAKKLWEELLDDEQPDITIMDWFEDSRLDQCVYELHVWLLAADRRTVIAQHHVAPRTNGRGPPGRWIQVSHVFRQYGPGVRFVYFQHKAKNRMEPGGLRRTRVTDSSVSVQLRE</sequence>
<keyword id="KW-0963">Cytoplasm</keyword>
<keyword id="KW-0597">Phosphoprotein</keyword>
<keyword id="KW-1185">Reference proteome</keyword>
<feature type="chain" id="PRO_0000421450" description="F-box only protein 50">
    <location>
        <begin position="1"/>
        <end position="266"/>
    </location>
</feature>
<feature type="domain" description="FBA" evidence="2">
    <location>
        <begin position="86"/>
        <end position="264"/>
    </location>
</feature>
<feature type="region of interest" description="Disordered" evidence="3">
    <location>
        <begin position="1"/>
        <end position="53"/>
    </location>
</feature>
<feature type="compositionally biased region" description="Basic and acidic residues" evidence="3">
    <location>
        <begin position="1"/>
        <end position="16"/>
    </location>
</feature>
<feature type="compositionally biased region" description="Pro residues" evidence="3">
    <location>
        <begin position="27"/>
        <end position="41"/>
    </location>
</feature>
<feature type="modified residue" description="Phosphoserine" evidence="6">
    <location>
        <position position="31"/>
    </location>
</feature>
<feature type="modified residue" description="Phosphoserine" evidence="6">
    <location>
        <position position="37"/>
    </location>
</feature>
<feature type="modified residue" description="Phosphoserine" evidence="6">
    <location>
        <position position="40"/>
    </location>
</feature>
<feature type="modified residue" description="Phosphoserine" evidence="6">
    <location>
        <position position="43"/>
    </location>
</feature>
<feature type="modified residue" description="Phosphothreonine" evidence="6">
    <location>
        <position position="46"/>
    </location>
</feature>
<feature type="sequence conflict" description="In Ref. 3; BAC25704." evidence="5" ref="3">
    <original>N</original>
    <variation>D</variation>
    <location>
        <position position="53"/>
    </location>
</feature>
<gene>
    <name type="primary">Nccrp1</name>
    <name type="synonym">Fbxo50</name>
</gene>
<evidence type="ECO:0000250" key="1"/>
<evidence type="ECO:0000255" key="2">
    <source>
        <dbReference type="PROSITE-ProRule" id="PRU00482"/>
    </source>
</evidence>
<evidence type="ECO:0000256" key="3">
    <source>
        <dbReference type="SAM" id="MobiDB-lite"/>
    </source>
</evidence>
<evidence type="ECO:0000269" key="4">
    <source>
    </source>
</evidence>
<evidence type="ECO:0000305" key="5"/>
<evidence type="ECO:0007744" key="6">
    <source>
    </source>
</evidence>
<reference key="1">
    <citation type="journal article" date="2009" name="PLoS Biol.">
        <title>Lineage-specific biology revealed by a finished genome assembly of the mouse.</title>
        <authorList>
            <person name="Church D.M."/>
            <person name="Goodstadt L."/>
            <person name="Hillier L.W."/>
            <person name="Zody M.C."/>
            <person name="Goldstein S."/>
            <person name="She X."/>
            <person name="Bult C.J."/>
            <person name="Agarwala R."/>
            <person name="Cherry J.L."/>
            <person name="DiCuccio M."/>
            <person name="Hlavina W."/>
            <person name="Kapustin Y."/>
            <person name="Meric P."/>
            <person name="Maglott D."/>
            <person name="Birtle Z."/>
            <person name="Marques A.C."/>
            <person name="Graves T."/>
            <person name="Zhou S."/>
            <person name="Teague B."/>
            <person name="Potamousis K."/>
            <person name="Churas C."/>
            <person name="Place M."/>
            <person name="Herschleb J."/>
            <person name="Runnheim R."/>
            <person name="Forrest D."/>
            <person name="Amos-Landgraf J."/>
            <person name="Schwartz D.C."/>
            <person name="Cheng Z."/>
            <person name="Lindblad-Toh K."/>
            <person name="Eichler E.E."/>
            <person name="Ponting C.P."/>
        </authorList>
    </citation>
    <scope>NUCLEOTIDE SEQUENCE [LARGE SCALE GENOMIC DNA]</scope>
    <source>
        <strain>C57BL/6J</strain>
    </source>
</reference>
<reference key="2">
    <citation type="submission" date="2005-09" db="EMBL/GenBank/DDBJ databases">
        <authorList>
            <person name="Mural R.J."/>
            <person name="Adams M.D."/>
            <person name="Myers E.W."/>
            <person name="Smith H.O."/>
            <person name="Venter J.C."/>
        </authorList>
    </citation>
    <scope>NUCLEOTIDE SEQUENCE [LARGE SCALE GENOMIC DNA]</scope>
</reference>
<reference key="3">
    <citation type="journal article" date="2005" name="Science">
        <title>The transcriptional landscape of the mammalian genome.</title>
        <authorList>
            <person name="Carninci P."/>
            <person name="Kasukawa T."/>
            <person name="Katayama S."/>
            <person name="Gough J."/>
            <person name="Frith M.C."/>
            <person name="Maeda N."/>
            <person name="Oyama R."/>
            <person name="Ravasi T."/>
            <person name="Lenhard B."/>
            <person name="Wells C."/>
            <person name="Kodzius R."/>
            <person name="Shimokawa K."/>
            <person name="Bajic V.B."/>
            <person name="Brenner S.E."/>
            <person name="Batalov S."/>
            <person name="Forrest A.R."/>
            <person name="Zavolan M."/>
            <person name="Davis M.J."/>
            <person name="Wilming L.G."/>
            <person name="Aidinis V."/>
            <person name="Allen J.E."/>
            <person name="Ambesi-Impiombato A."/>
            <person name="Apweiler R."/>
            <person name="Aturaliya R.N."/>
            <person name="Bailey T.L."/>
            <person name="Bansal M."/>
            <person name="Baxter L."/>
            <person name="Beisel K.W."/>
            <person name="Bersano T."/>
            <person name="Bono H."/>
            <person name="Chalk A.M."/>
            <person name="Chiu K.P."/>
            <person name="Choudhary V."/>
            <person name="Christoffels A."/>
            <person name="Clutterbuck D.R."/>
            <person name="Crowe M.L."/>
            <person name="Dalla E."/>
            <person name="Dalrymple B.P."/>
            <person name="de Bono B."/>
            <person name="Della Gatta G."/>
            <person name="di Bernardo D."/>
            <person name="Down T."/>
            <person name="Engstrom P."/>
            <person name="Fagiolini M."/>
            <person name="Faulkner G."/>
            <person name="Fletcher C.F."/>
            <person name="Fukushima T."/>
            <person name="Furuno M."/>
            <person name="Futaki S."/>
            <person name="Gariboldi M."/>
            <person name="Georgii-Hemming P."/>
            <person name="Gingeras T.R."/>
            <person name="Gojobori T."/>
            <person name="Green R.E."/>
            <person name="Gustincich S."/>
            <person name="Harbers M."/>
            <person name="Hayashi Y."/>
            <person name="Hensch T.K."/>
            <person name="Hirokawa N."/>
            <person name="Hill D."/>
            <person name="Huminiecki L."/>
            <person name="Iacono M."/>
            <person name="Ikeo K."/>
            <person name="Iwama A."/>
            <person name="Ishikawa T."/>
            <person name="Jakt M."/>
            <person name="Kanapin A."/>
            <person name="Katoh M."/>
            <person name="Kawasawa Y."/>
            <person name="Kelso J."/>
            <person name="Kitamura H."/>
            <person name="Kitano H."/>
            <person name="Kollias G."/>
            <person name="Krishnan S.P."/>
            <person name="Kruger A."/>
            <person name="Kummerfeld S.K."/>
            <person name="Kurochkin I.V."/>
            <person name="Lareau L.F."/>
            <person name="Lazarevic D."/>
            <person name="Lipovich L."/>
            <person name="Liu J."/>
            <person name="Liuni S."/>
            <person name="McWilliam S."/>
            <person name="Madan Babu M."/>
            <person name="Madera M."/>
            <person name="Marchionni L."/>
            <person name="Matsuda H."/>
            <person name="Matsuzawa S."/>
            <person name="Miki H."/>
            <person name="Mignone F."/>
            <person name="Miyake S."/>
            <person name="Morris K."/>
            <person name="Mottagui-Tabar S."/>
            <person name="Mulder N."/>
            <person name="Nakano N."/>
            <person name="Nakauchi H."/>
            <person name="Ng P."/>
            <person name="Nilsson R."/>
            <person name="Nishiguchi S."/>
            <person name="Nishikawa S."/>
            <person name="Nori F."/>
            <person name="Ohara O."/>
            <person name="Okazaki Y."/>
            <person name="Orlando V."/>
            <person name="Pang K.C."/>
            <person name="Pavan W.J."/>
            <person name="Pavesi G."/>
            <person name="Pesole G."/>
            <person name="Petrovsky N."/>
            <person name="Piazza S."/>
            <person name="Reed J."/>
            <person name="Reid J.F."/>
            <person name="Ring B.Z."/>
            <person name="Ringwald M."/>
            <person name="Rost B."/>
            <person name="Ruan Y."/>
            <person name="Salzberg S.L."/>
            <person name="Sandelin A."/>
            <person name="Schneider C."/>
            <person name="Schoenbach C."/>
            <person name="Sekiguchi K."/>
            <person name="Semple C.A."/>
            <person name="Seno S."/>
            <person name="Sessa L."/>
            <person name="Sheng Y."/>
            <person name="Shibata Y."/>
            <person name="Shimada H."/>
            <person name="Shimada K."/>
            <person name="Silva D."/>
            <person name="Sinclair B."/>
            <person name="Sperling S."/>
            <person name="Stupka E."/>
            <person name="Sugiura K."/>
            <person name="Sultana R."/>
            <person name="Takenaka Y."/>
            <person name="Taki K."/>
            <person name="Tammoja K."/>
            <person name="Tan S.L."/>
            <person name="Tang S."/>
            <person name="Taylor M.S."/>
            <person name="Tegner J."/>
            <person name="Teichmann S.A."/>
            <person name="Ueda H.R."/>
            <person name="van Nimwegen E."/>
            <person name="Verardo R."/>
            <person name="Wei C.L."/>
            <person name="Yagi K."/>
            <person name="Yamanishi H."/>
            <person name="Zabarovsky E."/>
            <person name="Zhu S."/>
            <person name="Zimmer A."/>
            <person name="Hide W."/>
            <person name="Bult C."/>
            <person name="Grimmond S.M."/>
            <person name="Teasdale R.D."/>
            <person name="Liu E.T."/>
            <person name="Brusic V."/>
            <person name="Quackenbush J."/>
            <person name="Wahlestedt C."/>
            <person name="Mattick J.S."/>
            <person name="Hume D.A."/>
            <person name="Kai C."/>
            <person name="Sasaki D."/>
            <person name="Tomaru Y."/>
            <person name="Fukuda S."/>
            <person name="Kanamori-Katayama M."/>
            <person name="Suzuki M."/>
            <person name="Aoki J."/>
            <person name="Arakawa T."/>
            <person name="Iida J."/>
            <person name="Imamura K."/>
            <person name="Itoh M."/>
            <person name="Kato T."/>
            <person name="Kawaji H."/>
            <person name="Kawagashira N."/>
            <person name="Kawashima T."/>
            <person name="Kojima M."/>
            <person name="Kondo S."/>
            <person name="Konno H."/>
            <person name="Nakano K."/>
            <person name="Ninomiya N."/>
            <person name="Nishio T."/>
            <person name="Okada M."/>
            <person name="Plessy C."/>
            <person name="Shibata K."/>
            <person name="Shiraki T."/>
            <person name="Suzuki S."/>
            <person name="Tagami M."/>
            <person name="Waki K."/>
            <person name="Watahiki A."/>
            <person name="Okamura-Oho Y."/>
            <person name="Suzuki H."/>
            <person name="Kawai J."/>
            <person name="Hayashizaki Y."/>
        </authorList>
    </citation>
    <scope>NUCLEOTIDE SEQUENCE [LARGE SCALE MRNA] OF 53-266</scope>
    <source>
        <strain>C57BL/6J</strain>
        <tissue>Embryo</tissue>
    </source>
</reference>
<reference key="4">
    <citation type="journal article" date="2010" name="Cell">
        <title>A tissue-specific atlas of mouse protein phosphorylation and expression.</title>
        <authorList>
            <person name="Huttlin E.L."/>
            <person name="Jedrychowski M.P."/>
            <person name="Elias J.E."/>
            <person name="Goswami T."/>
            <person name="Rad R."/>
            <person name="Beausoleil S.A."/>
            <person name="Villen J."/>
            <person name="Haas W."/>
            <person name="Sowa M.E."/>
            <person name="Gygi S.P."/>
        </authorList>
    </citation>
    <scope>PHOSPHORYLATION [LARGE SCALE ANALYSIS] AT SER-31; SER-37; SER-40; SER-43 AND THR-46</scope>
    <scope>IDENTIFICATION BY MASS SPECTROMETRY [LARGE SCALE ANALYSIS]</scope>
    <source>
        <tissue>Kidney</tissue>
        <tissue>Lung</tissue>
    </source>
</reference>
<reference key="5">
    <citation type="journal article" date="2011" name="PLoS ONE">
        <title>Characterization of non-specific cytotoxic cell receptor protein 1: a new member of the lectin-type subfamily of F-box proteins.</title>
        <authorList>
            <person name="Kallio H."/>
            <person name="Tolvanen M."/>
            <person name="Janis J."/>
            <person name="Pan P.W."/>
            <person name="Laurila E."/>
            <person name="Kallioniemi A."/>
            <person name="Kilpinen S."/>
            <person name="Tuominen V.J."/>
            <person name="Isola J."/>
            <person name="Valjakka J."/>
            <person name="Pastorekova S."/>
            <person name="Pastorek J."/>
            <person name="Parkkila S."/>
        </authorList>
    </citation>
    <scope>TISSUE SPECIFICITY</scope>
</reference>
<protein>
    <recommendedName>
        <fullName>F-box only protein 50</fullName>
    </recommendedName>
    <alternativeName>
        <fullName>NCC receptor protein 1</fullName>
        <shortName>NCCRP-1</shortName>
    </alternativeName>
    <alternativeName>
        <fullName>Non-specific cytotoxic cell receptor protein 1 homolog</fullName>
    </alternativeName>
</protein>
<organism>
    <name type="scientific">Mus musculus</name>
    <name type="common">Mouse</name>
    <dbReference type="NCBI Taxonomy" id="10090"/>
    <lineage>
        <taxon>Eukaryota</taxon>
        <taxon>Metazoa</taxon>
        <taxon>Chordata</taxon>
        <taxon>Craniata</taxon>
        <taxon>Vertebrata</taxon>
        <taxon>Euteleostomi</taxon>
        <taxon>Mammalia</taxon>
        <taxon>Eutheria</taxon>
        <taxon>Euarchontoglires</taxon>
        <taxon>Glires</taxon>
        <taxon>Rodentia</taxon>
        <taxon>Myomorpha</taxon>
        <taxon>Muroidea</taxon>
        <taxon>Muridae</taxon>
        <taxon>Murinae</taxon>
        <taxon>Mus</taxon>
        <taxon>Mus</taxon>
    </lineage>
</organism>